<keyword id="KW-0150">Chloroplast</keyword>
<keyword id="KW-0934">Plastid</keyword>
<keyword id="KW-0687">Ribonucleoprotein</keyword>
<keyword id="KW-0689">Ribosomal protein</keyword>
<dbReference type="EMBL" id="AP002983">
    <property type="protein sequence ID" value="BAB33204.1"/>
    <property type="molecule type" value="Genomic_DNA"/>
</dbReference>
<dbReference type="RefSeq" id="NP_084806.1">
    <property type="nucleotide sequence ID" value="NC_002694.1"/>
</dbReference>
<dbReference type="SMR" id="P58125"/>
<dbReference type="GeneID" id="802894"/>
<dbReference type="GO" id="GO:0009507">
    <property type="term" value="C:chloroplast"/>
    <property type="evidence" value="ECO:0007669"/>
    <property type="project" value="UniProtKB-SubCell"/>
</dbReference>
<dbReference type="GO" id="GO:0005739">
    <property type="term" value="C:mitochondrion"/>
    <property type="evidence" value="ECO:0007669"/>
    <property type="project" value="GOC"/>
</dbReference>
<dbReference type="GO" id="GO:0015935">
    <property type="term" value="C:small ribosomal subunit"/>
    <property type="evidence" value="ECO:0007669"/>
    <property type="project" value="TreeGrafter"/>
</dbReference>
<dbReference type="GO" id="GO:0003735">
    <property type="term" value="F:structural constituent of ribosome"/>
    <property type="evidence" value="ECO:0007669"/>
    <property type="project" value="InterPro"/>
</dbReference>
<dbReference type="GO" id="GO:0032543">
    <property type="term" value="P:mitochondrial translation"/>
    <property type="evidence" value="ECO:0007669"/>
    <property type="project" value="TreeGrafter"/>
</dbReference>
<dbReference type="FunFam" id="3.30.1320.10:FF:000003">
    <property type="entry name" value="30S ribosomal protein S16, chloroplastic"/>
    <property type="match status" value="1"/>
</dbReference>
<dbReference type="Gene3D" id="3.30.1320.10">
    <property type="match status" value="1"/>
</dbReference>
<dbReference type="HAMAP" id="MF_00385">
    <property type="entry name" value="Ribosomal_bS16"/>
    <property type="match status" value="1"/>
</dbReference>
<dbReference type="InterPro" id="IPR000307">
    <property type="entry name" value="Ribosomal_bS16"/>
</dbReference>
<dbReference type="InterPro" id="IPR020592">
    <property type="entry name" value="Ribosomal_bS16_CS"/>
</dbReference>
<dbReference type="InterPro" id="IPR023803">
    <property type="entry name" value="Ribosomal_bS16_dom_sf"/>
</dbReference>
<dbReference type="NCBIfam" id="TIGR00002">
    <property type="entry name" value="S16"/>
    <property type="match status" value="1"/>
</dbReference>
<dbReference type="PANTHER" id="PTHR12919">
    <property type="entry name" value="30S RIBOSOMAL PROTEIN S16"/>
    <property type="match status" value="1"/>
</dbReference>
<dbReference type="PANTHER" id="PTHR12919:SF20">
    <property type="entry name" value="SMALL RIBOSOMAL SUBUNIT PROTEIN BS16M"/>
    <property type="match status" value="1"/>
</dbReference>
<dbReference type="Pfam" id="PF00886">
    <property type="entry name" value="Ribosomal_S16"/>
    <property type="match status" value="1"/>
</dbReference>
<dbReference type="SUPFAM" id="SSF54565">
    <property type="entry name" value="Ribosomal protein S16"/>
    <property type="match status" value="1"/>
</dbReference>
<dbReference type="PROSITE" id="PS00732">
    <property type="entry name" value="RIBOSOMAL_S16"/>
    <property type="match status" value="1"/>
</dbReference>
<sequence>MVKLRLKRCGKKQRAVYRIVAIDVRSRREGRDLRKVGFYDPIKNQTYLNIPVILNFLEQGAQPTGTVQDISKKAGFFMDL</sequence>
<proteinExistence type="evidence at transcript level"/>
<organism>
    <name type="scientific">Lotus japonicus</name>
    <name type="common">Lotus corniculatus var. japonicus</name>
    <dbReference type="NCBI Taxonomy" id="34305"/>
    <lineage>
        <taxon>Eukaryota</taxon>
        <taxon>Viridiplantae</taxon>
        <taxon>Streptophyta</taxon>
        <taxon>Embryophyta</taxon>
        <taxon>Tracheophyta</taxon>
        <taxon>Spermatophyta</taxon>
        <taxon>Magnoliopsida</taxon>
        <taxon>eudicotyledons</taxon>
        <taxon>Gunneridae</taxon>
        <taxon>Pentapetalae</taxon>
        <taxon>rosids</taxon>
        <taxon>fabids</taxon>
        <taxon>Fabales</taxon>
        <taxon>Fabaceae</taxon>
        <taxon>Papilionoideae</taxon>
        <taxon>50 kb inversion clade</taxon>
        <taxon>NPAAA clade</taxon>
        <taxon>Hologalegina</taxon>
        <taxon>robinioid clade</taxon>
        <taxon>Loteae</taxon>
        <taxon>Lotus</taxon>
    </lineage>
</organism>
<feature type="chain" id="PRO_0000167305" description="Small ribosomal subunit protein bS16c">
    <location>
        <begin position="1"/>
        <end position="80"/>
    </location>
</feature>
<protein>
    <recommendedName>
        <fullName evidence="1">Small ribosomal subunit protein bS16c</fullName>
    </recommendedName>
    <alternativeName>
        <fullName evidence="3">30S ribosomal protein S16, chloroplastic</fullName>
    </alternativeName>
</protein>
<geneLocation type="chloroplast"/>
<evidence type="ECO:0000255" key="1">
    <source>
        <dbReference type="HAMAP-Rule" id="MF_00385"/>
    </source>
</evidence>
<evidence type="ECO:0000269" key="2">
    <source>
    </source>
</evidence>
<evidence type="ECO:0000305" key="3"/>
<accession>P58125</accession>
<gene>
    <name evidence="1" type="primary">rps16</name>
</gene>
<name>RR16_LOTJA</name>
<reference key="1">
    <citation type="journal article" date="2000" name="DNA Res.">
        <title>Complete structure of the chloroplast genome of a legume, Lotus japonicus.</title>
        <authorList>
            <person name="Kato T."/>
            <person name="Kaneko T."/>
            <person name="Sato S."/>
            <person name="Nakamura Y."/>
            <person name="Tabata S."/>
        </authorList>
    </citation>
    <scope>NUCLEOTIDE SEQUENCE [LARGE SCALE GENOMIC DNA]</scope>
    <source>
        <strain>cv. Miyakojima MG-20</strain>
    </source>
</reference>
<reference key="2">
    <citation type="journal article" date="2008" name="Mol. Biol. Evol.">
        <title>Substitution of the gene for chloroplast RPS16 was assisted by generation of a dual targeting signal.</title>
        <authorList>
            <person name="Ueda M."/>
            <person name="Nishikawa T."/>
            <person name="Fujimoto M."/>
            <person name="Takanashi H."/>
            <person name="Arimura S."/>
            <person name="Tsutsumi N."/>
            <person name="Kadowaki K."/>
        </authorList>
    </citation>
    <scope>INDUCTION</scope>
    <source>
        <tissue>Leaf</tissue>
    </source>
</reference>
<comment type="subcellular location">
    <subcellularLocation>
        <location>Plastid</location>
        <location>Chloroplast</location>
    </subcellularLocation>
</comment>
<comment type="induction">
    <text evidence="2">Transcribed and spliced in green leaves.</text>
</comment>
<comment type="similarity">
    <text evidence="1">Belongs to the bacterial ribosomal protein bS16 family.</text>
</comment>